<comment type="function">
    <text>Cytoplasmic dynein acts as a motor for the intracellular retrograde motility of vesicles and organelles along microtubules. Dynein has ATPase activity; the force-producing power stroke is thought to occur on release of ADP. Required to maintain uniform nuclear distribution in hyphae. May play an important role in the proper orientation of the mitotic spindle into the budding daughter cell yeast. Probably required for normal progression of the cell cycle.</text>
</comment>
<comment type="subunit">
    <text evidence="1">Consists of at least two heavy chains and a number of intermediate and light chains.</text>
</comment>
<comment type="subcellular location">
    <subcellularLocation>
        <location evidence="1">Cytoplasm</location>
        <location evidence="1">Cytoskeleton</location>
    </subcellularLocation>
    <text evidence="1">Probably binds indirectly to the inner plasma membrane.</text>
</comment>
<comment type="domain">
    <text>Dynein heavy chains probably consist of an N-terminal stem (which binds cargo and interacts with other dynein components), and the head or motor domain. The motor contains six tandemly-linked AAA domains in the head, which form a ring. A stalk-like structure (formed by two of the coiled coil domains) protrudes between AAA 4 and AAA 5 and terminates in a microtubule-binding site. A seventh domain may also contribute to this ring; it is not clear whether the N-terminus or the C-terminus forms this extra domain. There are four well-conserved and two non-conserved ATPase sites, one per AAA domain. Probably only one of these (within AAA 1) actually hydrolyzes ATP, the others may serve a regulatory function.</text>
</comment>
<comment type="similarity">
    <text evidence="3">Belongs to the dynein heavy chain family.</text>
</comment>
<organism>
    <name type="scientific">Eremothecium gossypii (strain ATCC 10895 / CBS 109.51 / FGSC 9923 / NRRL Y-1056)</name>
    <name type="common">Yeast</name>
    <name type="synonym">Ashbya gossypii</name>
    <dbReference type="NCBI Taxonomy" id="284811"/>
    <lineage>
        <taxon>Eukaryota</taxon>
        <taxon>Fungi</taxon>
        <taxon>Dikarya</taxon>
        <taxon>Ascomycota</taxon>
        <taxon>Saccharomycotina</taxon>
        <taxon>Saccharomycetes</taxon>
        <taxon>Saccharomycetales</taxon>
        <taxon>Saccharomycetaceae</taxon>
        <taxon>Eremothecium</taxon>
    </lineage>
</organism>
<accession>Q9C1M7</accession>
<feature type="chain" id="PRO_0000114637" description="Dynein heavy chain, cytoplasmic">
    <location>
        <begin position="1"/>
        <end position="4083"/>
    </location>
</feature>
<feature type="region of interest" description="Stem" evidence="1">
    <location>
        <begin position="1"/>
        <end position="1745"/>
    </location>
</feature>
<feature type="region of interest" description="AAA 1" evidence="1">
    <location>
        <begin position="1746"/>
        <end position="1967"/>
    </location>
</feature>
<feature type="region of interest" description="AAA 2" evidence="1">
    <location>
        <begin position="2026"/>
        <end position="2265"/>
    </location>
</feature>
<feature type="region of interest" description="AAA 3" evidence="1">
    <location>
        <begin position="2373"/>
        <end position="2622"/>
    </location>
</feature>
<feature type="region of interest" description="AAA 4" evidence="1">
    <location>
        <begin position="2716"/>
        <end position="2980"/>
    </location>
</feature>
<feature type="region of interest" description="Stalk" evidence="1">
    <location>
        <begin position="2987"/>
        <end position="3294"/>
    </location>
</feature>
<feature type="region of interest" description="AAA 5" evidence="1">
    <location>
        <begin position="3364"/>
        <end position="3592"/>
    </location>
</feature>
<feature type="region of interest" description="AAA 6" evidence="1">
    <location>
        <begin position="3748"/>
        <end position="3952"/>
    </location>
</feature>
<feature type="coiled-coil region" evidence="2">
    <location>
        <begin position="127"/>
        <end position="166"/>
    </location>
</feature>
<feature type="coiled-coil region" evidence="2">
    <location>
        <begin position="381"/>
        <end position="402"/>
    </location>
</feature>
<feature type="coiled-coil region" evidence="2">
    <location>
        <begin position="801"/>
        <end position="821"/>
    </location>
</feature>
<feature type="coiled-coil region" evidence="2">
    <location>
        <begin position="3015"/>
        <end position="3085"/>
    </location>
</feature>
<feature type="coiled-coil region" evidence="2">
    <location>
        <begin position="3223"/>
        <end position="3302"/>
    </location>
</feature>
<feature type="coiled-coil region" evidence="2">
    <location>
        <begin position="3527"/>
        <end position="3607"/>
    </location>
</feature>
<feature type="binding site" evidence="2">
    <location>
        <begin position="1784"/>
        <end position="1791"/>
    </location>
    <ligand>
        <name>ATP</name>
        <dbReference type="ChEBI" id="CHEBI:30616"/>
    </ligand>
</feature>
<feature type="binding site" evidence="2">
    <location>
        <begin position="2064"/>
        <end position="2071"/>
    </location>
    <ligand>
        <name>ATP</name>
        <dbReference type="ChEBI" id="CHEBI:30616"/>
    </ligand>
</feature>
<feature type="binding site" evidence="2">
    <location>
        <begin position="2412"/>
        <end position="2419"/>
    </location>
    <ligand>
        <name>ATP</name>
        <dbReference type="ChEBI" id="CHEBI:30616"/>
    </ligand>
</feature>
<feature type="binding site" evidence="2">
    <location>
        <begin position="2754"/>
        <end position="2761"/>
    </location>
    <ligand>
        <name>ATP</name>
        <dbReference type="ChEBI" id="CHEBI:30616"/>
    </ligand>
</feature>
<sequence>MTDDQVAQALVGYVFNVAKLFLKLGAEQDAFARTHGAKFEEWVGNGNMRTLFLVKDEEGEVQVLEELEGPEAEGPEQSGRLLLIKNRPFVDGSAPMESQVQVLHLPPRAHFDGFKSFVSFGVATMFDAVVSTNSNLEAKQESINSARRKIKDLSLSLQSLQQFIEVPDISATAHPLIKKIIAEGANPRNYTTYISDEQFADSQFLNSLQKIANGWIKSAQNLTKLTRNIEDGSATDEIRFWINLEQSLLALEKQIAIPEVEITLSILTAAKRFHATVTFISDTGLRDRILETQSYNQIMSDFPLADLQTATSFTKLGEAIESISIALKKLKVSTYPLARAVTFVEKISTELDQKLREMLPNLISSDFISFQEDYDHCIKIINQWEALLKEFTSLIRELMRKRSEKFIFMKIDTQTDSLKEVLNTVAAFRKKHDILIHVLKGIGYDTLSEDIQSIYEPVQYQDPLRDNASKWANAEAAYNQRVSLLENKLVDMLKKKLDDCKSSDSMFSIFEKYRPLMKRPRIQGAVREYQHELLHNVKDDLEHIHQQLSLQKWNSELSRLNDIPPVSASIIWSKQLTKKLQNLTSRLGLILGEDWISTSEGSQIFVECSSIMKVLNTDKLFETWVSNVSSQNFLLDEPIFKILITNEEYELHVNFDSVVGSLFKEVRNLMWMGFNVPSNIIKNSRRVRSLYPHAVMVSELLQTFVSAVQSFQERPHTWLLLKDETENIWQLLSAMITDTWDSVPLFEDDASHERAEDIQRDEPSILRLEHSIGELLSKFQQLDGLEKGLSSCLQQLEVFGKLDLQNLEVLINKIQLLVDQATLHGFHNMSGFIDYLNTRIRSYLVSTVSKILEESQLSPKKHYILQQGKKVTISPSIEETKKAWMRDFQKTLEVATNLPKITDKKFDITEGQMENFTDIGTDLSESLIKAFLRIEDACHAIDEHFQKWKKLELLWCLDELTLLERLGSDVEVSYRFLLDFMEERKAIDMVDSEITIAGDTMINNEQVYVRVSAKYDNWQRVLCEKLLENYMDHASEFDTQLVHSRRLLETSIINLGSLSKTTELIAYVDDIKNNLDLMFTRYSLLLNTQKLLQKLRFRIPQNFIHAEQIESDLVSLREICLRKEDLINKNRDAISNKLEAELLKIQEVANSLSQSWSKKKPLSVSIQPSEALSVLNTFEDSIAKVNTERELINRAAKILLVPIKLQNVLSPVIEEVNDYKAVWSSVDGLWNSFNATLSVKWADFESTAVKHRLEALMKKCQDMPPKVLQYKIFQNIAGSIEATLKSMHLLKALKEPAIKPRHWSILFKQLGASHIVSGNIDDQTFTLEDILQLNILLNEVSVKKIVIKARNENVLESSLSQMKARWRATKFDQFVHSSGLVLVKGWDVIFSNCNDDLNMITSMKNSPYFKVFEQEALEWETKLSNFYDIVLSWVEVQRQWMYLFGILAKKTEMKNLLPIEASKFASLTSEYNSLLLKLYGSEIAIDILHVHSTLPTLKRMAESLTKIRKSLNDFLETQRRLFPRFYFVGNEDLLQIIGAGDNFSEFSRHLSKLFSSVSDFIYDESLIQGVYSLEGETLLFANPVRVTPSSKLDQWMNEVDLEIKLTLSTLVKNCLESYRTSGSLKHIIEKYPFQALLLALQCTWTNKIETSMTKDNFGSICSSIDEEMASLAAVIDSYPTVTEKRKVESLIVELVHLKTITETLKNVELEQIDFHWKQTQRFYWDDNSNDPLNSITIEQSCVSFCYGFEYIGVPERLIYTPLLDSCFNAMVLALSEHMGGCPFGPAGTGKTETIKALGQNFGRMVLVFNCDDSFDFQAMSRLLFGITQVGAWGCFDEFNRLEEKILSAVSTQVEAIQLSLVQGKPEIEVLDKKGSLNSNTGIFITMNPGYAGRSELPENLKKMFREFAMMKPDALVIAEVILTILGLENPRVLAEKIVSLFKLLNDKTTSQKHYDFGLRALKSVLRNCLTILRSTTDLDSTQVLLRSLNEMVVPKLISVDEAVYEEAIADFFPGSRIKPSNEQLLSYLASYCESNQLVASDLFIKKCSQFYDIQKTQQAIILAGDAGTGKTSVWKSVINSMKRSGAKENIVYIIDTKTLKKEDLYGKLDPVTFDWKDGIFTHLLRKTLLDTMGNFKNSNIWIVFDSDLDPNYTETLNSVLDDNKVLTLPNGERLKIPPNLHILFEVQDLEHATAATVSRCGMIWFANNTLAAQDILISCLSREVATLQQDADVHDNIIATIQDIFAQFIQGSTLGNVIEATYKADHIMGVDFCRFIETAVTLLSCDIKKNKKQLSRLSQVACVRYMSKRLALVLIWAFVGGSDLETREKFSETICELLGISDIPTGSKFLLDYDVSVATQDWVPVSAEVPKTSLESHEVLIPDLIIPTVDTVRHETLLFDLLNADRPLILCGPPGSGKTMTLYNTLKRSDRFNIIGINFSKDTSVELFLKTLEQHTICTPTSRGIIMQPKAHGKQLVVFCDEINLPMLDEYGSQPVILFLRQLIEKRGFWNVQESKWVFIERIQIVGACNPPGHAGRVSITPRFLRHASIVMVDYPGQIAMEQIYETFFNAIFKLTPKLKGFASDFTKASLQVYYDCKATYTSEAHSHYIYSPRELTRWVRGIHFTISDSGNIDLAYMLELWAHESLRLFSDRLVSSSEKNIFQSILQNAITTHFPNQPLGSLESSQLLFSNWLSLNYSKVVKSEMYTFIKERLKTFAEEELDTELTIYDDMIDNILRIDRILKQVQGHGILVGPNYSGKTTITRFVAWMNGIKVVRPTIHRHFTIENFDEFLKQMLLRCGTESEKICLIIDESNILETSFLERMNTLLANSDVPGLFEADEYEALLSKIGQRISQLGLLLDTEQEMYDWFTSEISKNLHVIFNINDPDNRESTQLITSPALFNRSVINWIGTWSSRSCLHVVNEVIKNMPLDRADYTIPHHAAANLIVPDGNLVTIRDVVANLFVLFHEQYHRLLGNSQGSPSAFLTSLRRFQSLYMSKLKELEEHQRFTLVGLEKLKDTVIKVKQLNQSLSQKQVELQQKEKEARDTLDKMLVDQNEAERKQEASVEIQKILALQEKEINERRKIIMADLAVAEPAILEAQRGVKNIKKQQFTELRSMLNPPDAVKTTLEAVCVILGYSCKTWKDIQLAIRKDEFVTDIVYYNTETMMTPAMKQDIETDYLSRPKFNYESVNRASLACGPLYQWIVAQISYSEMLVKVTPLKEEMVKVENEMLQNKARLMAAGEMIKELQTSIESSKVSYSKLIREVEITKTEMESVQSKVERSIKLMESLTGEKERWIKNTEHFKDWNKNLIGNCFLSSLYESYCGPHDQSLRLKLFTIWSNTLAKFGIEYEPTYSFITDMVNPLTKVNWVACGLPDNELFVANFHIAMNSCHYPYVIDPSSTIVDTFANFYGRKMMITSFLDVGFVKQLENALRFGGCILIQDGEFFDPIISHLIAKEFKKAGGRLTVQIGDHEVDVSTSFQLIIHSKDPNSYMSSFVKTRMAVINFTVSKGSIEAQALQITLEKENPELQKQRTDLLKLNGEYKLHLRSLEDKLLESLNESDGSILENDSLISTLEQLKIESSEIAKKIEETNTVIVKVEDLVNEYNVLGEQSVLIFNLLESITQWHWFYQIPIEQFMECFSSIFATKTRENMTRSEHLLLALYEHVYMWFSHVFKDRDRMAFGILLFASYHHSRESKFFSEHFWKIIEGIASDTLGTVEHITDTKLEQLVAAANEKDYLKGLKSLLEFLPESSWHDSVPKYQNIIVACERGVDGTFKVQQLAQEMGKTVHSVALGSAESISMAEQDLIQYSGEGKWLLLQNLQMSHEWANTVLPKKLESIKANPDFRVFMTCGIQSKPLVVPLLSRSYKIAYEGEPGVLNTVCELWRTQSEELKNVKPVEKLHSKFILVWFHSIIMARCRLAPIGFTKKYDFHDGDFHAGSKFLDHIFEQSSNGKEHVDPDLVPWKLVSDTIGKIIYGGKVDDPADLDWCKRSARRMFSSDAYLNNFEVVQGLTVPIDRSSYSQYDKWFKSLDAAAERTTAWLELSDASALQNFYAHEARMICKKIIQTNGPTSLIH</sequence>
<proteinExistence type="inferred from homology"/>
<name>DYHC_EREGS</name>
<keyword id="KW-0067">ATP-binding</keyword>
<keyword id="KW-0175">Coiled coil</keyword>
<keyword id="KW-0963">Cytoplasm</keyword>
<keyword id="KW-0206">Cytoskeleton</keyword>
<keyword id="KW-0243">Dynein</keyword>
<keyword id="KW-0415">Karyogamy</keyword>
<keyword id="KW-0493">Microtubule</keyword>
<keyword id="KW-0505">Motor protein</keyword>
<keyword id="KW-0547">Nucleotide-binding</keyword>
<keyword id="KW-1185">Reference proteome</keyword>
<keyword id="KW-0677">Repeat</keyword>
<evidence type="ECO:0000250" key="1"/>
<evidence type="ECO:0000255" key="2"/>
<evidence type="ECO:0000305" key="3"/>
<reference key="1">
    <citation type="journal article" date="2001" name="J. Cell Sci.">
        <title>Cytoplasmic dynein is required to oppose the force that moves nuclei towards the hyphal tip in the filamentous ascomycete Ashbya gossypii.</title>
        <authorList>
            <person name="Alberti-Segui C."/>
            <person name="Dietrich F.S."/>
            <person name="Altmann-Joehl R."/>
            <person name="Hoepfner D."/>
            <person name="Philippsen P."/>
        </authorList>
    </citation>
    <scope>NUCLEOTIDE SEQUENCE [GENOMIC DNA]</scope>
</reference>
<reference key="2">
    <citation type="journal article" date="2004" name="Science">
        <title>The Ashbya gossypii genome as a tool for mapping the ancient Saccharomyces cerevisiae genome.</title>
        <authorList>
            <person name="Dietrich F.S."/>
            <person name="Voegeli S."/>
            <person name="Brachat S."/>
            <person name="Lerch A."/>
            <person name="Gates K."/>
            <person name="Steiner S."/>
            <person name="Mohr C."/>
            <person name="Poehlmann R."/>
            <person name="Luedi P."/>
            <person name="Choi S."/>
            <person name="Wing R.A."/>
            <person name="Flavier A."/>
            <person name="Gaffney T.D."/>
            <person name="Philippsen P."/>
        </authorList>
    </citation>
    <scope>NUCLEOTIDE SEQUENCE [LARGE SCALE GENOMIC DNA]</scope>
    <source>
        <strain>ATCC 10895 / CBS 109.51 / FGSC 9923 / NRRL Y-1056</strain>
    </source>
</reference>
<reference key="3">
    <citation type="journal article" date="2013" name="G3 (Bethesda)">
        <title>Genomes of Ashbya fungi isolated from insects reveal four mating-type loci, numerous translocations, lack of transposons, and distinct gene duplications.</title>
        <authorList>
            <person name="Dietrich F.S."/>
            <person name="Voegeli S."/>
            <person name="Kuo S."/>
            <person name="Philippsen P."/>
        </authorList>
    </citation>
    <scope>GENOME REANNOTATION</scope>
    <source>
        <strain>ATCC 10895 / CBS 109.51 / FGSC 9923 / NRRL Y-1056</strain>
    </source>
</reference>
<protein>
    <recommendedName>
        <fullName>Dynein heavy chain, cytoplasmic</fullName>
    </recommendedName>
    <alternativeName>
        <fullName>Dynein heavy chain, cytosolic</fullName>
        <shortName>DYHC</shortName>
    </alternativeName>
</protein>
<gene>
    <name type="primary">DYN1</name>
    <name type="synonym">DHC1</name>
    <name type="ordered locus">ACR258W</name>
</gene>
<dbReference type="EMBL" id="AF287477">
    <property type="protein sequence ID" value="AAK20175.1"/>
    <property type="molecule type" value="Genomic_DNA"/>
</dbReference>
<dbReference type="EMBL" id="AE016816">
    <property type="protein sequence ID" value="AAS51484.1"/>
    <property type="molecule type" value="Genomic_DNA"/>
</dbReference>
<dbReference type="RefSeq" id="NP_983660.1">
    <property type="nucleotide sequence ID" value="NM_209013.1"/>
</dbReference>
<dbReference type="SMR" id="Q9C1M7"/>
<dbReference type="FunCoup" id="Q9C1M7">
    <property type="interactions" value="787"/>
</dbReference>
<dbReference type="STRING" id="284811.Q9C1M7"/>
<dbReference type="EnsemblFungi" id="AAS51484">
    <property type="protein sequence ID" value="AAS51484"/>
    <property type="gene ID" value="AGOS_ACR258W"/>
</dbReference>
<dbReference type="GeneID" id="4619795"/>
<dbReference type="KEGG" id="ago:AGOS_ACR258W"/>
<dbReference type="eggNOG" id="KOG3595">
    <property type="taxonomic scope" value="Eukaryota"/>
</dbReference>
<dbReference type="HOGENOM" id="CLU_000038_7_0_1"/>
<dbReference type="InParanoid" id="Q9C1M7"/>
<dbReference type="OMA" id="NERQMTR"/>
<dbReference type="OrthoDB" id="447173at2759"/>
<dbReference type="Proteomes" id="UP000000591">
    <property type="component" value="Chromosome III"/>
</dbReference>
<dbReference type="GO" id="GO:0000235">
    <property type="term" value="C:astral microtubule"/>
    <property type="evidence" value="ECO:0007669"/>
    <property type="project" value="EnsemblFungi"/>
</dbReference>
<dbReference type="GO" id="GO:0005938">
    <property type="term" value="C:cell cortex"/>
    <property type="evidence" value="ECO:0000318"/>
    <property type="project" value="GO_Central"/>
</dbReference>
<dbReference type="GO" id="GO:0005868">
    <property type="term" value="C:cytoplasmic dynein complex"/>
    <property type="evidence" value="ECO:0000318"/>
    <property type="project" value="GO_Central"/>
</dbReference>
<dbReference type="GO" id="GO:0005881">
    <property type="term" value="C:cytoplasmic microtubule"/>
    <property type="evidence" value="ECO:0000318"/>
    <property type="project" value="GO_Central"/>
</dbReference>
<dbReference type="GO" id="GO:0005816">
    <property type="term" value="C:spindle pole body"/>
    <property type="evidence" value="ECO:0007669"/>
    <property type="project" value="EnsemblFungi"/>
</dbReference>
<dbReference type="GO" id="GO:0005524">
    <property type="term" value="F:ATP binding"/>
    <property type="evidence" value="ECO:0007669"/>
    <property type="project" value="UniProtKB-KW"/>
</dbReference>
<dbReference type="GO" id="GO:0016887">
    <property type="term" value="F:ATP hydrolysis activity"/>
    <property type="evidence" value="ECO:0007669"/>
    <property type="project" value="InterPro"/>
</dbReference>
<dbReference type="GO" id="GO:0045505">
    <property type="term" value="F:dynein intermediate chain binding"/>
    <property type="evidence" value="ECO:0000318"/>
    <property type="project" value="GO_Central"/>
</dbReference>
<dbReference type="GO" id="GO:0051959">
    <property type="term" value="F:dynein light intermediate chain binding"/>
    <property type="evidence" value="ECO:0000318"/>
    <property type="project" value="GO_Central"/>
</dbReference>
<dbReference type="GO" id="GO:0008569">
    <property type="term" value="F:minus-end-directed microtubule motor activity"/>
    <property type="evidence" value="ECO:0000318"/>
    <property type="project" value="GO_Central"/>
</dbReference>
<dbReference type="GO" id="GO:0031122">
    <property type="term" value="P:cytoplasmic microtubule organization"/>
    <property type="evidence" value="ECO:0000318"/>
    <property type="project" value="GO_Central"/>
</dbReference>
<dbReference type="GO" id="GO:0000132">
    <property type="term" value="P:establishment of mitotic spindle orientation"/>
    <property type="evidence" value="ECO:0007669"/>
    <property type="project" value="EnsemblFungi"/>
</dbReference>
<dbReference type="GO" id="GO:0000741">
    <property type="term" value="P:karyogamy"/>
    <property type="evidence" value="ECO:0007669"/>
    <property type="project" value="UniProtKB-KW"/>
</dbReference>
<dbReference type="GO" id="GO:0000070">
    <property type="term" value="P:mitotic sister chromatid segregation"/>
    <property type="evidence" value="ECO:0007669"/>
    <property type="project" value="EnsemblFungi"/>
</dbReference>
<dbReference type="GO" id="GO:0007052">
    <property type="term" value="P:mitotic spindle organization"/>
    <property type="evidence" value="ECO:0000318"/>
    <property type="project" value="GO_Central"/>
</dbReference>
<dbReference type="GO" id="GO:0007097">
    <property type="term" value="P:nuclear migration"/>
    <property type="evidence" value="ECO:0000318"/>
    <property type="project" value="GO_Central"/>
</dbReference>
<dbReference type="GO" id="GO:0030473">
    <property type="term" value="P:nuclear migration along microtubule"/>
    <property type="evidence" value="ECO:0007669"/>
    <property type="project" value="EnsemblFungi"/>
</dbReference>
<dbReference type="CDD" id="cd00009">
    <property type="entry name" value="AAA"/>
    <property type="match status" value="1"/>
</dbReference>
<dbReference type="FunFam" id="3.40.50.300:FF:000996">
    <property type="entry name" value="Cytoplasmic dynein heavy chain"/>
    <property type="match status" value="1"/>
</dbReference>
<dbReference type="FunFam" id="1.10.287.2620:FF:000008">
    <property type="entry name" value="Dynein heavy chain, cytoplasmic"/>
    <property type="match status" value="1"/>
</dbReference>
<dbReference type="FunFam" id="3.40.50.300:FF:002357">
    <property type="entry name" value="Glutathione S-transferase class-mu 26 kDa isozyme"/>
    <property type="match status" value="1"/>
</dbReference>
<dbReference type="Gene3D" id="1.10.287.2620">
    <property type="match status" value="1"/>
</dbReference>
<dbReference type="Gene3D" id="1.10.472.130">
    <property type="match status" value="1"/>
</dbReference>
<dbReference type="Gene3D" id="1.10.8.710">
    <property type="match status" value="1"/>
</dbReference>
<dbReference type="Gene3D" id="1.10.8.740">
    <property type="match status" value="1"/>
</dbReference>
<dbReference type="Gene3D" id="1.20.1280.160">
    <property type="match status" value="1"/>
</dbReference>
<dbReference type="Gene3D" id="1.20.58.1120">
    <property type="match status" value="1"/>
</dbReference>
<dbReference type="Gene3D" id="1.20.920.20">
    <property type="match status" value="1"/>
</dbReference>
<dbReference type="Gene3D" id="1.20.920.30">
    <property type="match status" value="1"/>
</dbReference>
<dbReference type="Gene3D" id="1.20.140.100">
    <property type="entry name" value="Dynein heavy chain, N-terminal domain 2"/>
    <property type="match status" value="1"/>
</dbReference>
<dbReference type="Gene3D" id="3.20.180.20">
    <property type="entry name" value="Dynein heavy chain, N-terminal domain 2"/>
    <property type="match status" value="1"/>
</dbReference>
<dbReference type="Gene3D" id="3.40.50.300">
    <property type="entry name" value="P-loop containing nucleotide triphosphate hydrolases"/>
    <property type="match status" value="5"/>
</dbReference>
<dbReference type="Gene3D" id="1.10.8.720">
    <property type="entry name" value="Region D6 of dynein motor"/>
    <property type="match status" value="1"/>
</dbReference>
<dbReference type="InterPro" id="IPR003593">
    <property type="entry name" value="AAA+_ATPase"/>
</dbReference>
<dbReference type="InterPro" id="IPR035699">
    <property type="entry name" value="AAA_6"/>
</dbReference>
<dbReference type="InterPro" id="IPR035706">
    <property type="entry name" value="AAA_9"/>
</dbReference>
<dbReference type="InterPro" id="IPR041658">
    <property type="entry name" value="AAA_lid_11"/>
</dbReference>
<dbReference type="InterPro" id="IPR042219">
    <property type="entry name" value="AAA_lid_11_sf"/>
</dbReference>
<dbReference type="InterPro" id="IPR026983">
    <property type="entry name" value="DHC"/>
</dbReference>
<dbReference type="InterPro" id="IPR054354">
    <property type="entry name" value="DYNC2H1-like_lid"/>
</dbReference>
<dbReference type="InterPro" id="IPR042222">
    <property type="entry name" value="Dynein_2_N"/>
</dbReference>
<dbReference type="InterPro" id="IPR043157">
    <property type="entry name" value="Dynein_AAA1S"/>
</dbReference>
<dbReference type="InterPro" id="IPR041466">
    <property type="entry name" value="Dynein_AAA5_ext"/>
</dbReference>
<dbReference type="InterPro" id="IPR024743">
    <property type="entry name" value="Dynein_HC_stalk"/>
</dbReference>
<dbReference type="InterPro" id="IPR024317">
    <property type="entry name" value="Dynein_heavy_chain_D4_dom"/>
</dbReference>
<dbReference type="InterPro" id="IPR004273">
    <property type="entry name" value="Dynein_heavy_D6_P-loop"/>
</dbReference>
<dbReference type="InterPro" id="IPR013602">
    <property type="entry name" value="Dynein_heavy_linker"/>
</dbReference>
<dbReference type="InterPro" id="IPR013594">
    <property type="entry name" value="Dynein_heavy_tail"/>
</dbReference>
<dbReference type="InterPro" id="IPR042228">
    <property type="entry name" value="Dynein_linker_3"/>
</dbReference>
<dbReference type="InterPro" id="IPR027417">
    <property type="entry name" value="P-loop_NTPase"/>
</dbReference>
<dbReference type="PANTHER" id="PTHR45703">
    <property type="entry name" value="DYNEIN HEAVY CHAIN"/>
    <property type="match status" value="1"/>
</dbReference>
<dbReference type="PANTHER" id="PTHR45703:SF36">
    <property type="entry name" value="DYNEIN HEAVY CHAIN, CYTOPLASMIC"/>
    <property type="match status" value="1"/>
</dbReference>
<dbReference type="Pfam" id="PF12774">
    <property type="entry name" value="AAA_6"/>
    <property type="match status" value="1"/>
</dbReference>
<dbReference type="Pfam" id="PF12775">
    <property type="entry name" value="AAA_7"/>
    <property type="match status" value="1"/>
</dbReference>
<dbReference type="Pfam" id="PF12780">
    <property type="entry name" value="AAA_8"/>
    <property type="match status" value="1"/>
</dbReference>
<dbReference type="Pfam" id="PF12781">
    <property type="entry name" value="AAA_9"/>
    <property type="match status" value="1"/>
</dbReference>
<dbReference type="Pfam" id="PF18198">
    <property type="entry name" value="AAA_lid_11"/>
    <property type="match status" value="1"/>
</dbReference>
<dbReference type="Pfam" id="PF08385">
    <property type="entry name" value="DHC_N1"/>
    <property type="match status" value="1"/>
</dbReference>
<dbReference type="Pfam" id="PF08393">
    <property type="entry name" value="DHC_N2"/>
    <property type="match status" value="1"/>
</dbReference>
<dbReference type="Pfam" id="PF22597">
    <property type="entry name" value="DYN_lid"/>
    <property type="match status" value="1"/>
</dbReference>
<dbReference type="Pfam" id="PF17852">
    <property type="entry name" value="Dynein_AAA_lid"/>
    <property type="match status" value="1"/>
</dbReference>
<dbReference type="Pfam" id="PF03028">
    <property type="entry name" value="Dynein_heavy"/>
    <property type="match status" value="1"/>
</dbReference>
<dbReference type="Pfam" id="PF12777">
    <property type="entry name" value="MT"/>
    <property type="match status" value="1"/>
</dbReference>
<dbReference type="SMART" id="SM00382">
    <property type="entry name" value="AAA"/>
    <property type="match status" value="3"/>
</dbReference>
<dbReference type="SUPFAM" id="SSF52540">
    <property type="entry name" value="P-loop containing nucleoside triphosphate hydrolases"/>
    <property type="match status" value="4"/>
</dbReference>